<proteinExistence type="inferred from homology"/>
<evidence type="ECO:0000255" key="1">
    <source>
        <dbReference type="HAMAP-Rule" id="MF_00168"/>
    </source>
</evidence>
<protein>
    <recommendedName>
        <fullName evidence="1">Queuine tRNA-ribosyltransferase</fullName>
        <ecNumber evidence="1">2.4.2.29</ecNumber>
    </recommendedName>
    <alternativeName>
        <fullName evidence="1">Guanine insertion enzyme</fullName>
    </alternativeName>
    <alternativeName>
        <fullName evidence="1">tRNA-guanine transglycosylase</fullName>
    </alternativeName>
</protein>
<gene>
    <name evidence="1" type="primary">tgt</name>
    <name type="ordered locus">EF_0896</name>
</gene>
<dbReference type="EC" id="2.4.2.29" evidence="1"/>
<dbReference type="EMBL" id="AE016830">
    <property type="protein sequence ID" value="AAO80704.1"/>
    <property type="molecule type" value="Genomic_DNA"/>
</dbReference>
<dbReference type="RefSeq" id="NP_814634.1">
    <property type="nucleotide sequence ID" value="NC_004668.1"/>
</dbReference>
<dbReference type="RefSeq" id="WP_002355772.1">
    <property type="nucleotide sequence ID" value="NZ_KE136527.1"/>
</dbReference>
<dbReference type="SMR" id="Q837E7"/>
<dbReference type="STRING" id="226185.EF_0896"/>
<dbReference type="EnsemblBacteria" id="AAO80704">
    <property type="protein sequence ID" value="AAO80704"/>
    <property type="gene ID" value="EF_0896"/>
</dbReference>
<dbReference type="GeneID" id="60893234"/>
<dbReference type="KEGG" id="efa:EF0896"/>
<dbReference type="PATRIC" id="fig|226185.45.peg.3105"/>
<dbReference type="eggNOG" id="COG0343">
    <property type="taxonomic scope" value="Bacteria"/>
</dbReference>
<dbReference type="HOGENOM" id="CLU_022060_0_1_9"/>
<dbReference type="UniPathway" id="UPA00392"/>
<dbReference type="Proteomes" id="UP000001415">
    <property type="component" value="Chromosome"/>
</dbReference>
<dbReference type="GO" id="GO:0005829">
    <property type="term" value="C:cytosol"/>
    <property type="evidence" value="ECO:0007669"/>
    <property type="project" value="TreeGrafter"/>
</dbReference>
<dbReference type="GO" id="GO:0046872">
    <property type="term" value="F:metal ion binding"/>
    <property type="evidence" value="ECO:0007669"/>
    <property type="project" value="UniProtKB-KW"/>
</dbReference>
<dbReference type="GO" id="GO:0008479">
    <property type="term" value="F:tRNA-guanosine(34) queuine transglycosylase activity"/>
    <property type="evidence" value="ECO:0007669"/>
    <property type="project" value="UniProtKB-UniRule"/>
</dbReference>
<dbReference type="GO" id="GO:0008616">
    <property type="term" value="P:queuosine biosynthetic process"/>
    <property type="evidence" value="ECO:0007669"/>
    <property type="project" value="UniProtKB-UniRule"/>
</dbReference>
<dbReference type="GO" id="GO:0002099">
    <property type="term" value="P:tRNA wobble guanine modification"/>
    <property type="evidence" value="ECO:0007669"/>
    <property type="project" value="TreeGrafter"/>
</dbReference>
<dbReference type="GO" id="GO:0101030">
    <property type="term" value="P:tRNA-guanine transglycosylation"/>
    <property type="evidence" value="ECO:0007669"/>
    <property type="project" value="InterPro"/>
</dbReference>
<dbReference type="FunFam" id="3.20.20.105:FF:000001">
    <property type="entry name" value="Queuine tRNA-ribosyltransferase"/>
    <property type="match status" value="1"/>
</dbReference>
<dbReference type="Gene3D" id="3.20.20.105">
    <property type="entry name" value="Queuine tRNA-ribosyltransferase-like"/>
    <property type="match status" value="1"/>
</dbReference>
<dbReference type="HAMAP" id="MF_00168">
    <property type="entry name" value="Q_tRNA_Tgt"/>
    <property type="match status" value="1"/>
</dbReference>
<dbReference type="InterPro" id="IPR050076">
    <property type="entry name" value="ArchSynthase1/Queuine_TRR"/>
</dbReference>
<dbReference type="InterPro" id="IPR004803">
    <property type="entry name" value="TGT"/>
</dbReference>
<dbReference type="InterPro" id="IPR036511">
    <property type="entry name" value="TGT-like_sf"/>
</dbReference>
<dbReference type="InterPro" id="IPR002616">
    <property type="entry name" value="tRNA_ribo_trans-like"/>
</dbReference>
<dbReference type="NCBIfam" id="TIGR00430">
    <property type="entry name" value="Q_tRNA_tgt"/>
    <property type="match status" value="1"/>
</dbReference>
<dbReference type="NCBIfam" id="TIGR00449">
    <property type="entry name" value="tgt_general"/>
    <property type="match status" value="1"/>
</dbReference>
<dbReference type="PANTHER" id="PTHR46499">
    <property type="entry name" value="QUEUINE TRNA-RIBOSYLTRANSFERASE"/>
    <property type="match status" value="1"/>
</dbReference>
<dbReference type="PANTHER" id="PTHR46499:SF1">
    <property type="entry name" value="QUEUINE TRNA-RIBOSYLTRANSFERASE"/>
    <property type="match status" value="1"/>
</dbReference>
<dbReference type="Pfam" id="PF01702">
    <property type="entry name" value="TGT"/>
    <property type="match status" value="1"/>
</dbReference>
<dbReference type="SUPFAM" id="SSF51713">
    <property type="entry name" value="tRNA-guanine transglycosylase"/>
    <property type="match status" value="1"/>
</dbReference>
<name>TGT_ENTFA</name>
<organism>
    <name type="scientific">Enterococcus faecalis (strain ATCC 700802 / V583)</name>
    <dbReference type="NCBI Taxonomy" id="226185"/>
    <lineage>
        <taxon>Bacteria</taxon>
        <taxon>Bacillati</taxon>
        <taxon>Bacillota</taxon>
        <taxon>Bacilli</taxon>
        <taxon>Lactobacillales</taxon>
        <taxon>Enterococcaceae</taxon>
        <taxon>Enterococcus</taxon>
    </lineage>
</organism>
<accession>Q837E7</accession>
<feature type="chain" id="PRO_0000135474" description="Queuine tRNA-ribosyltransferase">
    <location>
        <begin position="1"/>
        <end position="381"/>
    </location>
</feature>
<feature type="region of interest" description="RNA binding" evidence="1">
    <location>
        <begin position="251"/>
        <end position="257"/>
    </location>
</feature>
<feature type="region of interest" description="RNA binding; important for wobble base 34 recognition" evidence="1">
    <location>
        <begin position="275"/>
        <end position="279"/>
    </location>
</feature>
<feature type="active site" description="Proton acceptor" evidence="1">
    <location>
        <position position="96"/>
    </location>
</feature>
<feature type="active site" description="Nucleophile" evidence="1">
    <location>
        <position position="270"/>
    </location>
</feature>
<feature type="binding site" evidence="1">
    <location>
        <begin position="96"/>
        <end position="100"/>
    </location>
    <ligand>
        <name>substrate</name>
    </ligand>
</feature>
<feature type="binding site" evidence="1">
    <location>
        <position position="150"/>
    </location>
    <ligand>
        <name>substrate</name>
    </ligand>
</feature>
<feature type="binding site" evidence="1">
    <location>
        <position position="193"/>
    </location>
    <ligand>
        <name>substrate</name>
    </ligand>
</feature>
<feature type="binding site" evidence="1">
    <location>
        <position position="220"/>
    </location>
    <ligand>
        <name>substrate</name>
    </ligand>
</feature>
<feature type="binding site" evidence="1">
    <location>
        <position position="308"/>
    </location>
    <ligand>
        <name>Zn(2+)</name>
        <dbReference type="ChEBI" id="CHEBI:29105"/>
    </ligand>
</feature>
<feature type="binding site" evidence="1">
    <location>
        <position position="310"/>
    </location>
    <ligand>
        <name>Zn(2+)</name>
        <dbReference type="ChEBI" id="CHEBI:29105"/>
    </ligand>
</feature>
<feature type="binding site" evidence="1">
    <location>
        <position position="313"/>
    </location>
    <ligand>
        <name>Zn(2+)</name>
        <dbReference type="ChEBI" id="CHEBI:29105"/>
    </ligand>
</feature>
<feature type="binding site" evidence="1">
    <location>
        <position position="339"/>
    </location>
    <ligand>
        <name>Zn(2+)</name>
        <dbReference type="ChEBI" id="CHEBI:29105"/>
    </ligand>
</feature>
<comment type="function">
    <text evidence="1">Catalyzes the base-exchange of a guanine (G) residue with the queuine precursor 7-aminomethyl-7-deazaguanine (PreQ1) at position 34 (anticodon wobble position) in tRNAs with GU(N) anticodons (tRNA-Asp, -Asn, -His and -Tyr). Catalysis occurs through a double-displacement mechanism. The nucleophile active site attacks the C1' of nucleotide 34 to detach the guanine base from the RNA, forming a covalent enzyme-RNA intermediate. The proton acceptor active site deprotonates the incoming PreQ1, allowing a nucleophilic attack on the C1' of the ribose to form the product. After dissociation, two additional enzymatic reactions on the tRNA convert PreQ1 to queuine (Q), resulting in the hypermodified nucleoside queuosine (7-(((4,5-cis-dihydroxy-2-cyclopenten-1-yl)amino)methyl)-7-deazaguanosine).</text>
</comment>
<comment type="catalytic activity">
    <reaction evidence="1">
        <text>7-aminomethyl-7-carbaguanine + guanosine(34) in tRNA = 7-aminomethyl-7-carbaguanosine(34) in tRNA + guanine</text>
        <dbReference type="Rhea" id="RHEA:24104"/>
        <dbReference type="Rhea" id="RHEA-COMP:10341"/>
        <dbReference type="Rhea" id="RHEA-COMP:10342"/>
        <dbReference type="ChEBI" id="CHEBI:16235"/>
        <dbReference type="ChEBI" id="CHEBI:58703"/>
        <dbReference type="ChEBI" id="CHEBI:74269"/>
        <dbReference type="ChEBI" id="CHEBI:82833"/>
        <dbReference type="EC" id="2.4.2.29"/>
    </reaction>
</comment>
<comment type="cofactor">
    <cofactor evidence="1">
        <name>Zn(2+)</name>
        <dbReference type="ChEBI" id="CHEBI:29105"/>
    </cofactor>
    <text evidence="1">Binds 1 zinc ion per subunit.</text>
</comment>
<comment type="pathway">
    <text evidence="1">tRNA modification; tRNA-queuosine biosynthesis.</text>
</comment>
<comment type="subunit">
    <text evidence="1">Homodimer. Within each dimer, one monomer is responsible for RNA recognition and catalysis, while the other monomer binds to the replacement base PreQ1.</text>
</comment>
<comment type="similarity">
    <text evidence="1">Belongs to the queuine tRNA-ribosyltransferase family.</text>
</comment>
<reference key="1">
    <citation type="journal article" date="2003" name="Science">
        <title>Role of mobile DNA in the evolution of vancomycin-resistant Enterococcus faecalis.</title>
        <authorList>
            <person name="Paulsen I.T."/>
            <person name="Banerjei L."/>
            <person name="Myers G.S.A."/>
            <person name="Nelson K.E."/>
            <person name="Seshadri R."/>
            <person name="Read T.D."/>
            <person name="Fouts D.E."/>
            <person name="Eisen J.A."/>
            <person name="Gill S.R."/>
            <person name="Heidelberg J.F."/>
            <person name="Tettelin H."/>
            <person name="Dodson R.J."/>
            <person name="Umayam L.A."/>
            <person name="Brinkac L.M."/>
            <person name="Beanan M.J."/>
            <person name="Daugherty S.C."/>
            <person name="DeBoy R.T."/>
            <person name="Durkin S.A."/>
            <person name="Kolonay J.F."/>
            <person name="Madupu R."/>
            <person name="Nelson W.C."/>
            <person name="Vamathevan J.J."/>
            <person name="Tran B."/>
            <person name="Upton J."/>
            <person name="Hansen T."/>
            <person name="Shetty J."/>
            <person name="Khouri H.M."/>
            <person name="Utterback T.R."/>
            <person name="Radune D."/>
            <person name="Ketchum K.A."/>
            <person name="Dougherty B.A."/>
            <person name="Fraser C.M."/>
        </authorList>
    </citation>
    <scope>NUCLEOTIDE SEQUENCE [LARGE SCALE GENOMIC DNA]</scope>
    <source>
        <strain>ATCC 700802 / V583</strain>
    </source>
</reference>
<sequence length="381" mass="43407">MTEPAIRYRLIKKDKHTGARLGELITPHGTFPTPMFMPVGTLATVKTMSPEELKEMGAGVILSNTYHLWLRPGEDLVEEAGGLHKFMNWDQPILTDSGGFQVFSLSDMRKIEEEGVHFRNHLNGSKMFLSPEKAINIQNKLGSDIMMSFDECPPFDESYEYVKRSIERTSRWAERGLKAHANPDRQGLFGIVQGAGFEDLRRQSAKDLVSMDFPGYSIGGLSVGESKEEMNRVLDFTTPLIPENKPRYLMGVGAPDSLIDGVIRGIDMFDCVLPTRIARNGTCMTSQGRLVVKNAQYARDFRPLDEKCDCYVCRNYTRAYIRHLIKCDETFGIRLTSYHNLYFLLDLMKNVRQAIMDDNLLEFRQAFFEEYGFNKANAKSF</sequence>
<keyword id="KW-0328">Glycosyltransferase</keyword>
<keyword id="KW-0479">Metal-binding</keyword>
<keyword id="KW-0671">Queuosine biosynthesis</keyword>
<keyword id="KW-1185">Reference proteome</keyword>
<keyword id="KW-0808">Transferase</keyword>
<keyword id="KW-0819">tRNA processing</keyword>
<keyword id="KW-0862">Zinc</keyword>